<protein>
    <recommendedName>
        <fullName>Stathmin-2</fullName>
    </recommendedName>
    <alternativeName>
        <fullName>Superior cervical ganglion-10 protein</fullName>
        <shortName>Protein SCG10</shortName>
    </alternativeName>
</protein>
<reference key="1">
    <citation type="journal article" date="1993" name="Genomics">
        <title>Molecular diversity of the SCG10/stathmin gene family in the mouse.</title>
        <authorList>
            <person name="Okazaki T."/>
            <person name="Yoshida B.N."/>
            <person name="Avraham K.B."/>
            <person name="Wang H."/>
            <person name="Wuenschell C.W."/>
            <person name="Jenkins N.A."/>
            <person name="Copeland N.G."/>
            <person name="Anderson D.J."/>
            <person name="Mori N."/>
        </authorList>
    </citation>
    <scope>NUCLEOTIDE SEQUENCE [GENOMIC DNA]</scope>
</reference>
<reference key="2">
    <citation type="journal article" date="1994" name="Genomics">
        <authorList>
            <person name="Okazaki T."/>
            <person name="Yoshida B.N."/>
            <person name="Avraham K.B."/>
            <person name="Wang H."/>
            <person name="Wuenschell C.W."/>
            <person name="Jenkins N.A."/>
            <person name="Copeland N.G."/>
            <person name="Anderson D.J."/>
            <person name="Mori N."/>
        </authorList>
    </citation>
    <scope>ERRATUM OF PUBMED:8288240</scope>
</reference>
<reference key="3">
    <citation type="journal article" date="2004" name="Genome Res.">
        <title>The status, quality, and expansion of the NIH full-length cDNA project: the Mammalian Gene Collection (MGC).</title>
        <authorList>
            <consortium name="The MGC Project Team"/>
        </authorList>
    </citation>
    <scope>NUCLEOTIDE SEQUENCE [LARGE SCALE MRNA]</scope>
    <source>
        <strain>FVB/N</strain>
        <tissue>Colon</tissue>
    </source>
</reference>
<reference key="4">
    <citation type="journal article" date="2006" name="J. Cell Biol.">
        <title>JNK1 phosphorylation of SCG10 determines microtubule dynamics and axodendritic length.</title>
        <authorList>
            <person name="Tararuk T."/>
            <person name="Ostman N."/>
            <person name="Li W."/>
            <person name="Bjorkblom B."/>
            <person name="Padzik A."/>
            <person name="Zdrojewska J."/>
            <person name="Hongisto V."/>
            <person name="Herdegen T."/>
            <person name="Konopka W."/>
            <person name="Courtney M.J."/>
            <person name="Coffey E.T."/>
        </authorList>
    </citation>
    <scope>PHOSPHORYLATION</scope>
    <scope>SUBCELLULAR LOCATION</scope>
    <scope>DEVELOPMENTAL STAGE</scope>
</reference>
<reference key="5">
    <citation type="journal article" date="2010" name="Cell">
        <title>A tissue-specific atlas of mouse protein phosphorylation and expression.</title>
        <authorList>
            <person name="Huttlin E.L."/>
            <person name="Jedrychowski M.P."/>
            <person name="Elias J.E."/>
            <person name="Goswami T."/>
            <person name="Rad R."/>
            <person name="Beausoleil S.A."/>
            <person name="Villen J."/>
            <person name="Haas W."/>
            <person name="Sowa M.E."/>
            <person name="Gygi S.P."/>
        </authorList>
    </citation>
    <scope>PHOSPHORYLATION [LARGE SCALE ANALYSIS] AT SER-50 AND SER-62</scope>
    <scope>IDENTIFICATION BY MASS SPECTROMETRY [LARGE SCALE ANALYSIS]</scope>
    <source>
        <tissue>Brain</tissue>
    </source>
</reference>
<reference key="6">
    <citation type="journal article" date="2011" name="Nat. Neurosci.">
        <title>Phosphorylation of SCG10/stathmin-2 determines multipolar stage exit and neuronal migration rate.</title>
        <authorList>
            <person name="Westerlund N."/>
            <person name="Zdrojewska J."/>
            <person name="Padzik A."/>
            <person name="Komulainen E."/>
            <person name="Bjorkblom B."/>
            <person name="Rannikko E."/>
            <person name="Tararuk T."/>
            <person name="Garcia-Frigola C."/>
            <person name="Sandholm J."/>
            <person name="Nguyen L."/>
            <person name="Kallunki T."/>
            <person name="Courtney M.J."/>
            <person name="Coffey E.T."/>
        </authorList>
    </citation>
    <scope>FUNCTION</scope>
</reference>
<name>STMN2_MOUSE</name>
<evidence type="ECO:0000250" key="1"/>
<evidence type="ECO:0000250" key="2">
    <source>
        <dbReference type="UniProtKB" id="P16949"/>
    </source>
</evidence>
<evidence type="ECO:0000250" key="3">
    <source>
        <dbReference type="UniProtKB" id="P21818"/>
    </source>
</evidence>
<evidence type="ECO:0000250" key="4">
    <source>
        <dbReference type="UniProtKB" id="Q9JHU6"/>
    </source>
</evidence>
<evidence type="ECO:0000255" key="5"/>
<evidence type="ECO:0000255" key="6">
    <source>
        <dbReference type="PROSITE-ProRule" id="PRU00998"/>
    </source>
</evidence>
<evidence type="ECO:0000269" key="7">
    <source>
    </source>
</evidence>
<evidence type="ECO:0000269" key="8">
    <source>
    </source>
</evidence>
<evidence type="ECO:0000305" key="9"/>
<evidence type="ECO:0007744" key="10">
    <source>
    </source>
</evidence>
<comment type="function">
    <text evidence="8">Regulator of microtubule stability. When phosphorylated by MAPK8, stabilizes microtubules and consequently controls neurite length in cortical neurons. In the developing brain, negatively regulates the rate of exit from multipolar stage and retards radial migration from the ventricular zone.</text>
</comment>
<comment type="subunit">
    <text evidence="1">Interacts with ITM2C. Interacts with MAPK8. Interacts with KIFBP. Interacts (via the N-terminal region) with CIB1 (via C-terminal region); the interaction is direct, occurs in a calcium-dependent manner and attenuates the neurite outgrowth inhibition of STMN2.</text>
</comment>
<comment type="subcellular location">
    <subcellularLocation>
        <location evidence="7">Cytoplasm</location>
    </subcellularLocation>
    <subcellularLocation>
        <location evidence="7">Cytoplasm</location>
        <location evidence="7">Perinuclear region</location>
    </subcellularLocation>
    <subcellularLocation>
        <location evidence="7">Cell projection</location>
        <location evidence="7">Growth cone</location>
    </subcellularLocation>
    <subcellularLocation>
        <location evidence="7">Cell projection</location>
        <location evidence="7">Axon</location>
    </subcellularLocation>
    <subcellularLocation>
        <location evidence="9">Membrane</location>
        <topology evidence="9">Peripheral membrane protein</topology>
        <orientation evidence="9">Cytoplasmic side</orientation>
    </subcellularLocation>
    <subcellularLocation>
        <location evidence="1">Endosome</location>
    </subcellularLocation>
    <subcellularLocation>
        <location evidence="1">Golgi apparatus</location>
    </subcellularLocation>
    <subcellularLocation>
        <location evidence="1">Cell projection</location>
        <location evidence="1">Lamellipodium</location>
    </subcellularLocation>
    <text evidence="1">Colocalized with CIB1 in neurites of developing hippocampal primary neurons. Colocalized with CIB1 in the cell body, neuritis, growth cones of neurons and in neurites of developing hippocampal primary neurons. Colocalized with CIB1 to the leading edge of lamellipodia (By similarity). Associated with punctate structures in the perinuclear cytoplasm, axons, and growth cones of developing neurons. Exists in both soluble and membrane-bound forms. In the developing brain, mostly cytosolic.</text>
</comment>
<comment type="tissue specificity">
    <text>Neuron specific.</text>
</comment>
<comment type="developmental stage">
    <text evidence="7">At 15.5 dpc, mid to low expression throughout the midbrain, with more prominent levels in the telencephalon, especially in the intermediate zone, the midbrain roof, the olfactory epithelium, the inferior colliculus, and the medulla oblongata. telencephalon revealed concentrated (at protein level).</text>
</comment>
<comment type="PTM">
    <text evidence="1">Sumoylated.</text>
</comment>
<comment type="PTM">
    <text evidence="7">Phosphorylated mostly by MAPK8, but also by MAPK9 and MAPK10 in the developing brain cortex.</text>
</comment>
<comment type="PTM">
    <text evidence="1">N-terminal palmitoylation promotes specific anchoring to the cytosolic leaflet of Golgi membranes and subsequent vesicular trafficking along dendrites and axons. Neuronal Stathmins are substrates for palmitoyltransferases ZDHHC3, ZDHHC7 and ZDHHC15 (By similarity).</text>
</comment>
<comment type="similarity">
    <text evidence="9">Belongs to the stathmin family.</text>
</comment>
<gene>
    <name type="primary">Stmn2</name>
    <name type="synonym">Scg10</name>
    <name type="synonym">Scgn10</name>
    <name type="synonym">Stmb2</name>
</gene>
<organism>
    <name type="scientific">Mus musculus</name>
    <name type="common">Mouse</name>
    <dbReference type="NCBI Taxonomy" id="10090"/>
    <lineage>
        <taxon>Eukaryota</taxon>
        <taxon>Metazoa</taxon>
        <taxon>Chordata</taxon>
        <taxon>Craniata</taxon>
        <taxon>Vertebrata</taxon>
        <taxon>Euteleostomi</taxon>
        <taxon>Mammalia</taxon>
        <taxon>Eutheria</taxon>
        <taxon>Euarchontoglires</taxon>
        <taxon>Glires</taxon>
        <taxon>Rodentia</taxon>
        <taxon>Myomorpha</taxon>
        <taxon>Muroidea</taxon>
        <taxon>Muridae</taxon>
        <taxon>Murinae</taxon>
        <taxon>Mus</taxon>
        <taxon>Mus</taxon>
    </lineage>
</organism>
<accession>P55821</accession>
<proteinExistence type="evidence at protein level"/>
<feature type="chain" id="PRO_0000182397" description="Stathmin-2">
    <location>
        <begin position="1"/>
        <end position="179"/>
    </location>
</feature>
<feature type="domain" description="SLD" evidence="6">
    <location>
        <begin position="38"/>
        <end position="179"/>
    </location>
</feature>
<feature type="region of interest" description="Membrane attachment" evidence="5">
    <location>
        <begin position="1"/>
        <end position="26"/>
    </location>
</feature>
<feature type="region of interest" description="Regulatory/phosphorylation domain" evidence="5">
    <location>
        <begin position="39"/>
        <end position="96"/>
    </location>
</feature>
<feature type="coiled-coil region" evidence="5">
    <location>
        <begin position="75"/>
        <end position="179"/>
    </location>
</feature>
<feature type="modified residue" description="Phosphoserine" evidence="5">
    <location>
        <position position="16"/>
    </location>
</feature>
<feature type="modified residue" description="Phosphoserine" evidence="10">
    <location>
        <position position="50"/>
    </location>
</feature>
<feature type="modified residue" description="Phosphoserine" evidence="10">
    <location>
        <position position="62"/>
    </location>
</feature>
<feature type="modified residue" description="Phosphoserine" evidence="3">
    <location>
        <position position="73"/>
    </location>
</feature>
<feature type="modified residue" description="Phosphoserine" evidence="4 5">
    <location>
        <position position="80"/>
    </location>
</feature>
<feature type="modified residue" description="Phosphoserine" evidence="2 5">
    <location>
        <position position="97"/>
    </location>
</feature>
<feature type="lipid moiety-binding region" description="S-palmitoyl cysteine" evidence="1">
    <location>
        <position position="22"/>
    </location>
</feature>
<feature type="lipid moiety-binding region" description="S-palmitoyl cysteine" evidence="1">
    <location>
        <position position="24"/>
    </location>
</feature>
<keyword id="KW-0966">Cell projection</keyword>
<keyword id="KW-0175">Coiled coil</keyword>
<keyword id="KW-0963">Cytoplasm</keyword>
<keyword id="KW-0967">Endosome</keyword>
<keyword id="KW-0333">Golgi apparatus</keyword>
<keyword id="KW-0449">Lipoprotein</keyword>
<keyword id="KW-0472">Membrane</keyword>
<keyword id="KW-0564">Palmitate</keyword>
<keyword id="KW-0597">Phosphoprotein</keyword>
<keyword id="KW-1185">Reference proteome</keyword>
<keyword id="KW-0832">Ubl conjugation</keyword>
<sequence>MAKTAMAYKEKMKELSMLSLICSCFYPEPRNINIYTYDDMEVKQINKRASGQAFELILKPPSPISEAPRTLASPKKKDLSLEEIQKKLEAAEERRKSQEAQVLKQLAEKREHEREVLQKALEENNNFSKMAEEKLILKMEQIKENREANLAAIIERLQEKERHAAEVRRNKELQVELSG</sequence>
<dbReference type="EMBL" id="L20259">
    <property type="status" value="NOT_ANNOTATED_CDS"/>
    <property type="molecule type" value="Genomic_DNA"/>
</dbReference>
<dbReference type="EMBL" id="L20260">
    <property type="status" value="NOT_ANNOTATED_CDS"/>
    <property type="molecule type" value="Genomic_DNA"/>
</dbReference>
<dbReference type="EMBL" id="L20261">
    <property type="status" value="NOT_ANNOTATED_CDS"/>
    <property type="molecule type" value="Genomic_DNA"/>
</dbReference>
<dbReference type="EMBL" id="L20262">
    <property type="status" value="NOT_ANNOTATED_CDS"/>
    <property type="molecule type" value="Genomic_DNA"/>
</dbReference>
<dbReference type="EMBL" id="L20263">
    <property type="status" value="NOT_ANNOTATED_CDS"/>
    <property type="molecule type" value="Genomic_DNA"/>
</dbReference>
<dbReference type="EMBL" id="BC026538">
    <property type="protein sequence ID" value="AAH26538.1"/>
    <property type="molecule type" value="mRNA"/>
</dbReference>
<dbReference type="CCDS" id="CCDS17231.1"/>
<dbReference type="PIR" id="A48917">
    <property type="entry name" value="A48917"/>
</dbReference>
<dbReference type="RefSeq" id="NP_079561.1">
    <property type="nucleotide sequence ID" value="NM_025285.2"/>
</dbReference>
<dbReference type="SMR" id="P55821"/>
<dbReference type="BioGRID" id="203093">
    <property type="interactions" value="8"/>
</dbReference>
<dbReference type="FunCoup" id="P55821">
    <property type="interactions" value="239"/>
</dbReference>
<dbReference type="IntAct" id="P55821">
    <property type="interactions" value="1"/>
</dbReference>
<dbReference type="MINT" id="P55821"/>
<dbReference type="STRING" id="10090.ENSMUSP00000029002"/>
<dbReference type="iPTMnet" id="P55821"/>
<dbReference type="PhosphoSitePlus" id="P55821"/>
<dbReference type="jPOST" id="P55821"/>
<dbReference type="PaxDb" id="10090-ENSMUSP00000029002"/>
<dbReference type="PeptideAtlas" id="P55821"/>
<dbReference type="ProteomicsDB" id="258641"/>
<dbReference type="Pumba" id="P55821"/>
<dbReference type="ABCD" id="P55821">
    <property type="antibodies" value="1 sequenced antibody"/>
</dbReference>
<dbReference type="Antibodypedia" id="6337">
    <property type="antibodies" value="446 antibodies from 39 providers"/>
</dbReference>
<dbReference type="Ensembl" id="ENSMUST00000029002.9">
    <property type="protein sequence ID" value="ENSMUSP00000029002.8"/>
    <property type="gene ID" value="ENSMUSG00000027500.11"/>
</dbReference>
<dbReference type="GeneID" id="20257"/>
<dbReference type="KEGG" id="mmu:20257"/>
<dbReference type="UCSC" id="uc008oon.1">
    <property type="organism name" value="mouse"/>
</dbReference>
<dbReference type="AGR" id="MGI:98241"/>
<dbReference type="CTD" id="11075"/>
<dbReference type="MGI" id="MGI:98241">
    <property type="gene designation" value="Stmn2"/>
</dbReference>
<dbReference type="VEuPathDB" id="HostDB:ENSMUSG00000027500"/>
<dbReference type="eggNOG" id="ENOG502RENQ">
    <property type="taxonomic scope" value="Eukaryota"/>
</dbReference>
<dbReference type="GeneTree" id="ENSGT01030000234597"/>
<dbReference type="HOGENOM" id="CLU_102026_0_0_1"/>
<dbReference type="InParanoid" id="P55821"/>
<dbReference type="OMA" id="CFYSEPH"/>
<dbReference type="OrthoDB" id="5986631at2759"/>
<dbReference type="PhylomeDB" id="P55821"/>
<dbReference type="TreeFam" id="TF326935"/>
<dbReference type="Reactome" id="R-MMU-9696273">
    <property type="pathway name" value="RND1 GTPase cycle"/>
</dbReference>
<dbReference type="BioGRID-ORCS" id="20257">
    <property type="hits" value="2 hits in 78 CRISPR screens"/>
</dbReference>
<dbReference type="ChiTaRS" id="Stmn2">
    <property type="organism name" value="mouse"/>
</dbReference>
<dbReference type="PRO" id="PR:P55821"/>
<dbReference type="Proteomes" id="UP000000589">
    <property type="component" value="Chromosome 3"/>
</dbReference>
<dbReference type="RNAct" id="P55821">
    <property type="molecule type" value="protein"/>
</dbReference>
<dbReference type="Bgee" id="ENSMUSG00000027500">
    <property type="expression patterns" value="Expressed in embryonic brain and 257 other cell types or tissues"/>
</dbReference>
<dbReference type="ExpressionAtlas" id="P55821">
    <property type="expression patterns" value="baseline and differential"/>
</dbReference>
<dbReference type="GO" id="GO:0005737">
    <property type="term" value="C:cytoplasm"/>
    <property type="evidence" value="ECO:0000250"/>
    <property type="project" value="UniProtKB"/>
</dbReference>
<dbReference type="GO" id="GO:0005768">
    <property type="term" value="C:endosome"/>
    <property type="evidence" value="ECO:0007669"/>
    <property type="project" value="UniProtKB-SubCell"/>
</dbReference>
<dbReference type="GO" id="GO:0005794">
    <property type="term" value="C:Golgi apparatus"/>
    <property type="evidence" value="ECO:0007669"/>
    <property type="project" value="UniProtKB-SubCell"/>
</dbReference>
<dbReference type="GO" id="GO:0030426">
    <property type="term" value="C:growth cone"/>
    <property type="evidence" value="ECO:0000314"/>
    <property type="project" value="MGI"/>
</dbReference>
<dbReference type="GO" id="GO:0030027">
    <property type="term" value="C:lamellipodium"/>
    <property type="evidence" value="ECO:0000250"/>
    <property type="project" value="UniProtKB"/>
</dbReference>
<dbReference type="GO" id="GO:0016020">
    <property type="term" value="C:membrane"/>
    <property type="evidence" value="ECO:0007669"/>
    <property type="project" value="UniProtKB-SubCell"/>
</dbReference>
<dbReference type="GO" id="GO:0043005">
    <property type="term" value="C:neuron projection"/>
    <property type="evidence" value="ECO:0000250"/>
    <property type="project" value="UniProtKB"/>
</dbReference>
<dbReference type="GO" id="GO:0043025">
    <property type="term" value="C:neuronal cell body"/>
    <property type="evidence" value="ECO:0000250"/>
    <property type="project" value="UniProtKB"/>
</dbReference>
<dbReference type="GO" id="GO:0048471">
    <property type="term" value="C:perinuclear region of cytoplasm"/>
    <property type="evidence" value="ECO:0007669"/>
    <property type="project" value="UniProtKB-SubCell"/>
</dbReference>
<dbReference type="GO" id="GO:0048306">
    <property type="term" value="F:calcium-dependent protein binding"/>
    <property type="evidence" value="ECO:0007669"/>
    <property type="project" value="Ensembl"/>
</dbReference>
<dbReference type="GO" id="GO:1990090">
    <property type="term" value="P:cellular response to nerve growth factor stimulus"/>
    <property type="evidence" value="ECO:0000250"/>
    <property type="project" value="UniProtKB"/>
</dbReference>
<dbReference type="GO" id="GO:0007026">
    <property type="term" value="P:negative regulation of microtubule depolymerization"/>
    <property type="evidence" value="ECO:0007669"/>
    <property type="project" value="Ensembl"/>
</dbReference>
<dbReference type="GO" id="GO:0031115">
    <property type="term" value="P:negative regulation of microtubule polymerization"/>
    <property type="evidence" value="ECO:0000250"/>
    <property type="project" value="UniProtKB"/>
</dbReference>
<dbReference type="GO" id="GO:0010977">
    <property type="term" value="P:negative regulation of neuron projection development"/>
    <property type="evidence" value="ECO:0007669"/>
    <property type="project" value="Ensembl"/>
</dbReference>
<dbReference type="GO" id="GO:0031117">
    <property type="term" value="P:positive regulation of microtubule depolymerization"/>
    <property type="evidence" value="ECO:0007669"/>
    <property type="project" value="Ensembl"/>
</dbReference>
<dbReference type="GO" id="GO:0010976">
    <property type="term" value="P:positive regulation of neuron projection development"/>
    <property type="evidence" value="ECO:0000250"/>
    <property type="project" value="UniProtKB"/>
</dbReference>
<dbReference type="Gene3D" id="6.10.280.30">
    <property type="match status" value="1"/>
</dbReference>
<dbReference type="InterPro" id="IPR030514">
    <property type="entry name" value="Stathmin_CS"/>
</dbReference>
<dbReference type="InterPro" id="IPR000956">
    <property type="entry name" value="Stathmin_fam"/>
</dbReference>
<dbReference type="InterPro" id="IPR036002">
    <property type="entry name" value="Stathmin_sf"/>
</dbReference>
<dbReference type="PANTHER" id="PTHR10104">
    <property type="entry name" value="STATHMIN"/>
    <property type="match status" value="1"/>
</dbReference>
<dbReference type="PANTHER" id="PTHR10104:SF18">
    <property type="entry name" value="STATHMIN-2"/>
    <property type="match status" value="1"/>
</dbReference>
<dbReference type="Pfam" id="PF00836">
    <property type="entry name" value="Stathmin"/>
    <property type="match status" value="1"/>
</dbReference>
<dbReference type="PIRSF" id="PIRSF002285">
    <property type="entry name" value="Stathmin"/>
    <property type="match status" value="1"/>
</dbReference>
<dbReference type="PRINTS" id="PR00345">
    <property type="entry name" value="STATHMIN"/>
</dbReference>
<dbReference type="SUPFAM" id="SSF101494">
    <property type="entry name" value="Stathmin"/>
    <property type="match status" value="1"/>
</dbReference>
<dbReference type="PROSITE" id="PS00563">
    <property type="entry name" value="STATHMIN_1"/>
    <property type="match status" value="1"/>
</dbReference>
<dbReference type="PROSITE" id="PS01041">
    <property type="entry name" value="STATHMIN_2"/>
    <property type="match status" value="1"/>
</dbReference>
<dbReference type="PROSITE" id="PS51663">
    <property type="entry name" value="STATHMIN_3"/>
    <property type="match status" value="1"/>
</dbReference>